<accession>O48448</accession>
<comment type="function">
    <text evidence="1 2 3">Tail completion protein that caps the tail and interacts with the connector gp16, thereby attaching the tail to the capsid.</text>
</comment>
<comment type="subunit">
    <text evidence="1 3">Homohexamer (PubMed:22072538, PubMed:25991862). Interacts with gp16 connector protein (PubMed:22072538, PubMed:25991862).</text>
</comment>
<comment type="subcellular location">
    <subcellularLocation>
        <location evidence="3">Virion</location>
    </subcellularLocation>
    <text evidence="3">Forms a thin ring-like structure at the proximal tip of the tail.</text>
</comment>
<reference key="1">
    <citation type="journal article" date="1997" name="Gene">
        <title>The complete nucleotide sequence and functional organization of Bacillus subtilis bacteriophage SPP1.</title>
        <authorList>
            <person name="Alonso J.C."/>
            <person name="Luder G."/>
            <person name="Stiege A.C."/>
            <person name="Chai S."/>
            <person name="Weise F."/>
            <person name="Trautner T.A."/>
        </authorList>
    </citation>
    <scope>NUCLEOTIDE SEQUENCE [LARGE SCALE GENOMIC DNA]</scope>
</reference>
<reference key="2">
    <citation type="journal article" date="2014" name="Mol. Microbiol.">
        <title>A touch of glue to complete bacteriophage assembly: the tail-to-head joining protein (THJP) family.</title>
        <authorList>
            <person name="Auzat I."/>
            <person name="Petitpas I."/>
            <person name="Lurz R."/>
            <person name="Weise F."/>
            <person name="Tavares P."/>
        </authorList>
    </citation>
    <scope>FUNCTION</scope>
</reference>
<reference evidence="6" key="3">
    <citation type="journal article" date="2012" name="Proteins">
        <title>Solution structure of gp17 from the Siphoviridae bacteriophage SPP1: insights into its role in virion assembly.</title>
        <authorList>
            <person name="Chagot B."/>
            <person name="Auzat I."/>
            <person name="Gallopin M."/>
            <person name="Petitpas I."/>
            <person name="Gilquin B."/>
            <person name="Tavares P."/>
            <person name="Zinn-Justin S."/>
        </authorList>
    </citation>
    <scope>STRUCTURE BY NMR OF 2-134</scope>
    <scope>INTERACTION WITH GP16 CONNECTOR</scope>
    <scope>FUNCTION</scope>
    <scope>SUBUNIT</scope>
</reference>
<reference evidence="7 8" key="4">
    <citation type="journal article" date="2015" name="Proc. Natl. Acad. Sci. U.S.A.">
        <title>Structural rearrangements in the phage head-to-tail interface during assembly and infection.</title>
        <authorList>
            <person name="Chaban Y."/>
            <person name="Lurz R."/>
            <person name="Brasiles S."/>
            <person name="Cornilleau C."/>
            <person name="Karreman M."/>
            <person name="Zinn-Justin S."/>
            <person name="Tavares P."/>
            <person name="Orlova E.V."/>
        </authorList>
    </citation>
    <scope>STRUCTURE BY ELECTRON MICROSCOPY (7.20 ANGSTROMS)</scope>
    <scope>INTERACTION WITH GP16 CONNECTOR</scope>
    <scope>FUNCTION</scope>
    <scope>SUBCELLULAR LOCATION</scope>
    <scope>SUBUNIT</scope>
</reference>
<dbReference type="EMBL" id="X97918">
    <property type="protein sequence ID" value="CAA66549.1"/>
    <property type="molecule type" value="Genomic_DNA"/>
</dbReference>
<dbReference type="PIR" id="T42288">
    <property type="entry name" value="T42288"/>
</dbReference>
<dbReference type="RefSeq" id="NP_690679.1">
    <property type="nucleotide sequence ID" value="NC_004166.2"/>
</dbReference>
<dbReference type="PDB" id="2LFP">
    <property type="method" value="NMR"/>
    <property type="chains" value="A=2-134"/>
</dbReference>
<dbReference type="PDB" id="5A20">
    <property type="method" value="EM"/>
    <property type="resolution" value="7.60 A"/>
    <property type="chains" value="G=1-134"/>
</dbReference>
<dbReference type="PDB" id="5A21">
    <property type="method" value="EM"/>
    <property type="resolution" value="7.20 A"/>
    <property type="chains" value="G=1-134"/>
</dbReference>
<dbReference type="PDBsum" id="2LFP"/>
<dbReference type="PDBsum" id="5A20"/>
<dbReference type="PDBsum" id="5A21"/>
<dbReference type="EMDB" id="EMD-2993"/>
<dbReference type="EMDB" id="EMD-2994"/>
<dbReference type="SMR" id="O48448"/>
<dbReference type="GeneID" id="955319"/>
<dbReference type="KEGG" id="vg:955319"/>
<dbReference type="OrthoDB" id="13616at10239"/>
<dbReference type="EvolutionaryTrace" id="O48448"/>
<dbReference type="Proteomes" id="UP000002559">
    <property type="component" value="Genome"/>
</dbReference>
<dbReference type="GO" id="GO:0098015">
    <property type="term" value="C:virus tail"/>
    <property type="evidence" value="ECO:0000314"/>
    <property type="project" value="UniProtKB"/>
</dbReference>
<dbReference type="GO" id="GO:0098004">
    <property type="term" value="P:virus tail fiber assembly"/>
    <property type="evidence" value="ECO:0000314"/>
    <property type="project" value="UniProtKB"/>
</dbReference>
<dbReference type="Gene3D" id="3.30.2000.30">
    <property type="match status" value="1"/>
</dbReference>
<dbReference type="InterPro" id="IPR021508">
    <property type="entry name" value="Gp17-like"/>
</dbReference>
<dbReference type="InterPro" id="IPR053745">
    <property type="entry name" value="Viral_Tail_Comp_sf"/>
</dbReference>
<dbReference type="Pfam" id="PF11367">
    <property type="entry name" value="Tail_completion_gp17"/>
    <property type="match status" value="1"/>
</dbReference>
<feature type="chain" id="PRO_0000438143" description="Tail completion protein gp17">
    <location>
        <begin position="1"/>
        <end position="134"/>
    </location>
</feature>
<feature type="helix" evidence="9">
    <location>
        <begin position="5"/>
        <end position="20"/>
    </location>
</feature>
<feature type="turn" evidence="9">
    <location>
        <begin position="22"/>
        <end position="27"/>
    </location>
</feature>
<feature type="strand" evidence="9">
    <location>
        <begin position="31"/>
        <end position="34"/>
    </location>
</feature>
<feature type="strand" evidence="9">
    <location>
        <begin position="41"/>
        <end position="47"/>
    </location>
</feature>
<feature type="strand" evidence="9">
    <location>
        <begin position="60"/>
        <end position="62"/>
    </location>
</feature>
<feature type="strand" evidence="9">
    <location>
        <begin position="64"/>
        <end position="71"/>
    </location>
</feature>
<feature type="helix" evidence="9">
    <location>
        <begin position="76"/>
        <end position="90"/>
    </location>
</feature>
<feature type="strand" evidence="9">
    <location>
        <begin position="122"/>
        <end position="130"/>
    </location>
</feature>
<sequence length="134" mass="15010">MTWKLASRALQKATVENLESYQPLMEMVNQVTESPGKDDPYPYVVIGDQSSTPFETKSSFGENITMDFHVWGGTTRAEAQDISSRVLEALTYKPLMFEGFTFVAKKLVLAQVITDTDGVTKHGIIKVRFTINNN</sequence>
<proteinExistence type="evidence at protein level"/>
<name>COMPL_BPSPP</name>
<keyword id="KW-0002">3D-structure</keyword>
<keyword id="KW-1185">Reference proteome</keyword>
<keyword id="KW-1188">Viral release from host cell</keyword>
<keyword id="KW-1245">Viral tail assembly</keyword>
<keyword id="KW-1227">Viral tail protein</keyword>
<keyword id="KW-0946">Virion</keyword>
<organism>
    <name type="scientific">Bacillus phage SPP1</name>
    <name type="common">Bacteriophage SPP1</name>
    <dbReference type="NCBI Taxonomy" id="10724"/>
    <lineage>
        <taxon>Viruses</taxon>
        <taxon>Duplodnaviria</taxon>
        <taxon>Heunggongvirae</taxon>
        <taxon>Uroviricota</taxon>
        <taxon>Caudoviricetes</taxon>
    </lineage>
</organism>
<evidence type="ECO:0000269" key="1">
    <source>
    </source>
</evidence>
<evidence type="ECO:0000269" key="2">
    <source>
    </source>
</evidence>
<evidence type="ECO:0000269" key="3">
    <source>
    </source>
</evidence>
<evidence type="ECO:0000303" key="4">
    <source>
    </source>
</evidence>
<evidence type="ECO:0000305" key="5"/>
<evidence type="ECO:0007744" key="6">
    <source>
        <dbReference type="PDB" id="2LFP"/>
    </source>
</evidence>
<evidence type="ECO:0007744" key="7">
    <source>
        <dbReference type="PDB" id="5A20"/>
    </source>
</evidence>
<evidence type="ECO:0007744" key="8">
    <source>
        <dbReference type="PDB" id="5A21"/>
    </source>
</evidence>
<evidence type="ECO:0007829" key="9">
    <source>
        <dbReference type="PDB" id="2LFP"/>
    </source>
</evidence>
<protein>
    <recommendedName>
        <fullName evidence="5">Tail completion protein gp17</fullName>
    </recommendedName>
    <alternativeName>
        <fullName>Gene product 17</fullName>
        <shortName>gp17</shortName>
    </alternativeName>
    <alternativeName>
        <fullName evidence="5">Head-tail joining protein gp17</fullName>
    </alternativeName>
    <alternativeName>
        <fullName evidence="4">Tail-to-head joining protein</fullName>
    </alternativeName>
</protein>
<organismHost>
    <name type="scientific">Bacillus subtilis</name>
    <dbReference type="NCBI Taxonomy" id="1423"/>
</organismHost>